<accession>Q1GHC9</accession>
<feature type="chain" id="PRO_0000253001" description="Glutamate 5-kinase">
    <location>
        <begin position="1"/>
        <end position="368"/>
    </location>
</feature>
<feature type="domain" description="PUA" evidence="1">
    <location>
        <begin position="278"/>
        <end position="355"/>
    </location>
</feature>
<feature type="binding site" evidence="1">
    <location>
        <position position="13"/>
    </location>
    <ligand>
        <name>ATP</name>
        <dbReference type="ChEBI" id="CHEBI:30616"/>
    </ligand>
</feature>
<feature type="binding site" evidence="1">
    <location>
        <position position="54"/>
    </location>
    <ligand>
        <name>substrate</name>
    </ligand>
</feature>
<feature type="binding site" evidence="1">
    <location>
        <position position="141"/>
    </location>
    <ligand>
        <name>substrate</name>
    </ligand>
</feature>
<feature type="binding site" evidence="1">
    <location>
        <position position="153"/>
    </location>
    <ligand>
        <name>substrate</name>
    </ligand>
</feature>
<feature type="binding site" evidence="1">
    <location>
        <begin position="173"/>
        <end position="174"/>
    </location>
    <ligand>
        <name>ATP</name>
        <dbReference type="ChEBI" id="CHEBI:30616"/>
    </ligand>
</feature>
<keyword id="KW-0028">Amino-acid biosynthesis</keyword>
<keyword id="KW-0067">ATP-binding</keyword>
<keyword id="KW-0963">Cytoplasm</keyword>
<keyword id="KW-0418">Kinase</keyword>
<keyword id="KW-0547">Nucleotide-binding</keyword>
<keyword id="KW-0641">Proline biosynthesis</keyword>
<keyword id="KW-1185">Reference proteome</keyword>
<keyword id="KW-0808">Transferase</keyword>
<evidence type="ECO:0000255" key="1">
    <source>
        <dbReference type="HAMAP-Rule" id="MF_00456"/>
    </source>
</evidence>
<gene>
    <name evidence="1" type="primary">proB</name>
    <name type="ordered locus">TM1040_1204</name>
</gene>
<comment type="function">
    <text evidence="1">Catalyzes the transfer of a phosphate group to glutamate to form L-glutamate 5-phosphate.</text>
</comment>
<comment type="catalytic activity">
    <reaction evidence="1">
        <text>L-glutamate + ATP = L-glutamyl 5-phosphate + ADP</text>
        <dbReference type="Rhea" id="RHEA:14877"/>
        <dbReference type="ChEBI" id="CHEBI:29985"/>
        <dbReference type="ChEBI" id="CHEBI:30616"/>
        <dbReference type="ChEBI" id="CHEBI:58274"/>
        <dbReference type="ChEBI" id="CHEBI:456216"/>
        <dbReference type="EC" id="2.7.2.11"/>
    </reaction>
</comment>
<comment type="pathway">
    <text evidence="1">Amino-acid biosynthesis; L-proline biosynthesis; L-glutamate 5-semialdehyde from L-glutamate: step 1/2.</text>
</comment>
<comment type="subcellular location">
    <subcellularLocation>
        <location evidence="1">Cytoplasm</location>
    </subcellularLocation>
</comment>
<comment type="similarity">
    <text evidence="1">Belongs to the glutamate 5-kinase family.</text>
</comment>
<reference key="1">
    <citation type="submission" date="2006-05" db="EMBL/GenBank/DDBJ databases">
        <title>Complete sequence of chromosome of Silicibacter sp. TM1040.</title>
        <authorList>
            <consortium name="US DOE Joint Genome Institute"/>
            <person name="Copeland A."/>
            <person name="Lucas S."/>
            <person name="Lapidus A."/>
            <person name="Barry K."/>
            <person name="Detter J.C."/>
            <person name="Glavina del Rio T."/>
            <person name="Hammon N."/>
            <person name="Israni S."/>
            <person name="Dalin E."/>
            <person name="Tice H."/>
            <person name="Pitluck S."/>
            <person name="Brettin T."/>
            <person name="Bruce D."/>
            <person name="Han C."/>
            <person name="Tapia R."/>
            <person name="Goodwin L."/>
            <person name="Thompson L.S."/>
            <person name="Gilna P."/>
            <person name="Schmutz J."/>
            <person name="Larimer F."/>
            <person name="Land M."/>
            <person name="Hauser L."/>
            <person name="Kyrpides N."/>
            <person name="Kim E."/>
            <person name="Belas R."/>
            <person name="Moran M.A."/>
            <person name="Buchan A."/>
            <person name="Gonzalez J.M."/>
            <person name="Schell M.A."/>
            <person name="Sun F."/>
            <person name="Richardson P."/>
        </authorList>
    </citation>
    <scope>NUCLEOTIDE SEQUENCE [LARGE SCALE GENOMIC DNA]</scope>
    <source>
        <strain>TM1040</strain>
    </source>
</reference>
<organism>
    <name type="scientific">Ruegeria sp. (strain TM1040)</name>
    <name type="common">Silicibacter sp.</name>
    <dbReference type="NCBI Taxonomy" id="292414"/>
    <lineage>
        <taxon>Bacteria</taxon>
        <taxon>Pseudomonadati</taxon>
        <taxon>Pseudomonadota</taxon>
        <taxon>Alphaproteobacteria</taxon>
        <taxon>Rhodobacterales</taxon>
        <taxon>Roseobacteraceae</taxon>
        <taxon>Ruegeria</taxon>
    </lineage>
</organism>
<name>PROB_RUEST</name>
<protein>
    <recommendedName>
        <fullName evidence="1">Glutamate 5-kinase</fullName>
        <ecNumber evidence="1">2.7.2.11</ecNumber>
    </recommendedName>
    <alternativeName>
        <fullName evidence="1">Gamma-glutamyl kinase</fullName>
        <shortName evidence="1">GK</shortName>
    </alternativeName>
</protein>
<proteinExistence type="inferred from homology"/>
<dbReference type="EC" id="2.7.2.11" evidence="1"/>
<dbReference type="EMBL" id="CP000377">
    <property type="protein sequence ID" value="ABF63937.1"/>
    <property type="molecule type" value="Genomic_DNA"/>
</dbReference>
<dbReference type="RefSeq" id="WP_011538543.1">
    <property type="nucleotide sequence ID" value="NC_008044.1"/>
</dbReference>
<dbReference type="SMR" id="Q1GHC9"/>
<dbReference type="STRING" id="292414.TM1040_1204"/>
<dbReference type="KEGG" id="sit:TM1040_1204"/>
<dbReference type="eggNOG" id="COG0263">
    <property type="taxonomic scope" value="Bacteria"/>
</dbReference>
<dbReference type="HOGENOM" id="CLU_025400_2_0_5"/>
<dbReference type="OrthoDB" id="9804434at2"/>
<dbReference type="UniPathway" id="UPA00098">
    <property type="reaction ID" value="UER00359"/>
</dbReference>
<dbReference type="Proteomes" id="UP000000636">
    <property type="component" value="Chromosome"/>
</dbReference>
<dbReference type="GO" id="GO:0005829">
    <property type="term" value="C:cytosol"/>
    <property type="evidence" value="ECO:0007669"/>
    <property type="project" value="TreeGrafter"/>
</dbReference>
<dbReference type="GO" id="GO:0005524">
    <property type="term" value="F:ATP binding"/>
    <property type="evidence" value="ECO:0007669"/>
    <property type="project" value="UniProtKB-KW"/>
</dbReference>
<dbReference type="GO" id="GO:0004349">
    <property type="term" value="F:glutamate 5-kinase activity"/>
    <property type="evidence" value="ECO:0007669"/>
    <property type="project" value="UniProtKB-UniRule"/>
</dbReference>
<dbReference type="GO" id="GO:0003723">
    <property type="term" value="F:RNA binding"/>
    <property type="evidence" value="ECO:0007669"/>
    <property type="project" value="InterPro"/>
</dbReference>
<dbReference type="GO" id="GO:0055129">
    <property type="term" value="P:L-proline biosynthetic process"/>
    <property type="evidence" value="ECO:0007669"/>
    <property type="project" value="UniProtKB-UniRule"/>
</dbReference>
<dbReference type="CDD" id="cd04242">
    <property type="entry name" value="AAK_G5K_ProB"/>
    <property type="match status" value="1"/>
</dbReference>
<dbReference type="CDD" id="cd21157">
    <property type="entry name" value="PUA_G5K"/>
    <property type="match status" value="1"/>
</dbReference>
<dbReference type="FunFam" id="3.40.1160.10:FF:000018">
    <property type="entry name" value="Glutamate 5-kinase"/>
    <property type="match status" value="1"/>
</dbReference>
<dbReference type="Gene3D" id="3.40.1160.10">
    <property type="entry name" value="Acetylglutamate kinase-like"/>
    <property type="match status" value="2"/>
</dbReference>
<dbReference type="Gene3D" id="2.30.130.10">
    <property type="entry name" value="PUA domain"/>
    <property type="match status" value="1"/>
</dbReference>
<dbReference type="HAMAP" id="MF_00456">
    <property type="entry name" value="ProB"/>
    <property type="match status" value="1"/>
</dbReference>
<dbReference type="InterPro" id="IPR036393">
    <property type="entry name" value="AceGlu_kinase-like_sf"/>
</dbReference>
<dbReference type="InterPro" id="IPR001048">
    <property type="entry name" value="Asp/Glu/Uridylate_kinase"/>
</dbReference>
<dbReference type="InterPro" id="IPR041739">
    <property type="entry name" value="G5K_ProB"/>
</dbReference>
<dbReference type="InterPro" id="IPR001057">
    <property type="entry name" value="Glu/AcGlu_kinase"/>
</dbReference>
<dbReference type="InterPro" id="IPR011529">
    <property type="entry name" value="Glu_5kinase"/>
</dbReference>
<dbReference type="InterPro" id="IPR005715">
    <property type="entry name" value="Glu_5kinase/COase_Synthase"/>
</dbReference>
<dbReference type="InterPro" id="IPR019797">
    <property type="entry name" value="Glutamate_5-kinase_CS"/>
</dbReference>
<dbReference type="InterPro" id="IPR002478">
    <property type="entry name" value="PUA"/>
</dbReference>
<dbReference type="InterPro" id="IPR015947">
    <property type="entry name" value="PUA-like_sf"/>
</dbReference>
<dbReference type="InterPro" id="IPR036974">
    <property type="entry name" value="PUA_sf"/>
</dbReference>
<dbReference type="NCBIfam" id="TIGR01027">
    <property type="entry name" value="proB"/>
    <property type="match status" value="1"/>
</dbReference>
<dbReference type="PANTHER" id="PTHR43654">
    <property type="entry name" value="GLUTAMATE 5-KINASE"/>
    <property type="match status" value="1"/>
</dbReference>
<dbReference type="PANTHER" id="PTHR43654:SF1">
    <property type="entry name" value="ISOPENTENYL PHOSPHATE KINASE"/>
    <property type="match status" value="1"/>
</dbReference>
<dbReference type="Pfam" id="PF00696">
    <property type="entry name" value="AA_kinase"/>
    <property type="match status" value="1"/>
</dbReference>
<dbReference type="Pfam" id="PF01472">
    <property type="entry name" value="PUA"/>
    <property type="match status" value="1"/>
</dbReference>
<dbReference type="PIRSF" id="PIRSF000729">
    <property type="entry name" value="GK"/>
    <property type="match status" value="1"/>
</dbReference>
<dbReference type="PRINTS" id="PR00474">
    <property type="entry name" value="GLU5KINASE"/>
</dbReference>
<dbReference type="SMART" id="SM00359">
    <property type="entry name" value="PUA"/>
    <property type="match status" value="1"/>
</dbReference>
<dbReference type="SUPFAM" id="SSF53633">
    <property type="entry name" value="Carbamate kinase-like"/>
    <property type="match status" value="1"/>
</dbReference>
<dbReference type="SUPFAM" id="SSF88697">
    <property type="entry name" value="PUA domain-like"/>
    <property type="match status" value="1"/>
</dbReference>
<dbReference type="PROSITE" id="PS00902">
    <property type="entry name" value="GLUTAMATE_5_KINASE"/>
    <property type="match status" value="1"/>
</dbReference>
<dbReference type="PROSITE" id="PS50890">
    <property type="entry name" value="PUA"/>
    <property type="match status" value="1"/>
</dbReference>
<sequence length="368" mass="38732">MAALSTARRVVIKIGSALLVDRTSSALRQEWLLSLAEDVARLKKQGKDVILVSSGSIALGRGALGLPRKDLPLEQSQAAAAVGQIRLARAYEEALAPHGITTAQVLVTLEDSENRRRYLNSRATLETLIGLGAVPIVNENDTIATDEIRYGDNDRLAAQVAVTVGADVLILLSDVDGFYSANPALDPDAKRFDRIEQITPEIEAMAGDGVSGLSKGGMITKLLAAKMATAAGCAMAISEGSVMSPVSALEAGAASTWFTAQGDPQVARKRWIAAMKTRGVITVDEGAAKALHNGNSLLPAGVRHVEGDFGRGDPLAILGPDGRKLGQGLSRYTAEEARALQGHRSDEIEAILGYAGRAALIHRDDMAL</sequence>